<evidence type="ECO:0000255" key="1">
    <source>
        <dbReference type="HAMAP-Rule" id="MF_01416"/>
    </source>
</evidence>
<feature type="chain" id="PRO_0000370984" description="ATP synthase subunit delta">
    <location>
        <begin position="1"/>
        <end position="276"/>
    </location>
</feature>
<reference key="1">
    <citation type="journal article" date="2007" name="Genome Res.">
        <title>Genome characteristics of facultatively symbiotic Frankia sp. strains reflect host range and host plant biogeography.</title>
        <authorList>
            <person name="Normand P."/>
            <person name="Lapierre P."/>
            <person name="Tisa L.S."/>
            <person name="Gogarten J.P."/>
            <person name="Alloisio N."/>
            <person name="Bagnarol E."/>
            <person name="Bassi C.A."/>
            <person name="Berry A.M."/>
            <person name="Bickhart D.M."/>
            <person name="Choisne N."/>
            <person name="Couloux A."/>
            <person name="Cournoyer B."/>
            <person name="Cruveiller S."/>
            <person name="Daubin V."/>
            <person name="Demange N."/>
            <person name="Francino M.P."/>
            <person name="Goltsman E."/>
            <person name="Huang Y."/>
            <person name="Kopp O.R."/>
            <person name="Labarre L."/>
            <person name="Lapidus A."/>
            <person name="Lavire C."/>
            <person name="Marechal J."/>
            <person name="Martinez M."/>
            <person name="Mastronunzio J.E."/>
            <person name="Mullin B.C."/>
            <person name="Niemann J."/>
            <person name="Pujic P."/>
            <person name="Rawnsley T."/>
            <person name="Rouy Z."/>
            <person name="Schenowitz C."/>
            <person name="Sellstedt A."/>
            <person name="Tavares F."/>
            <person name="Tomkins J.P."/>
            <person name="Vallenet D."/>
            <person name="Valverde C."/>
            <person name="Wall L.G."/>
            <person name="Wang Y."/>
            <person name="Medigue C."/>
            <person name="Benson D.R."/>
        </authorList>
    </citation>
    <scope>NUCLEOTIDE SEQUENCE [LARGE SCALE GENOMIC DNA]</scope>
    <source>
        <strain>DSM 45818 / CECT 9043 / HFP020203 / CcI3</strain>
    </source>
</reference>
<keyword id="KW-0066">ATP synthesis</keyword>
<keyword id="KW-1003">Cell membrane</keyword>
<keyword id="KW-0139">CF(1)</keyword>
<keyword id="KW-0375">Hydrogen ion transport</keyword>
<keyword id="KW-0406">Ion transport</keyword>
<keyword id="KW-0472">Membrane</keyword>
<keyword id="KW-1185">Reference proteome</keyword>
<keyword id="KW-0813">Transport</keyword>
<sequence length="276" mass="29556">MEGASRHGLAAARATLDEATATAPGAPRPVDAGRIAEDLRAVAELLAREPAVRRALTDPGAPVAARTELVTRLFGTQLAPASLRIVHTAVGARWSRPFDLQYALLELSVEALLVEAERDGALEEVEDELFRFGRILDQNAPLALALTDPAAPAAVKDRLLTRLLAGRAHPVTVRLVQQAAADRIHGDVERRLAEFSRIAAARRGRVVAIVRTAVPLSSEVVARLGAAISRYFGRQIQLQVDLDPDILGGVVVQVGGEVVDGSVLRRFVAARRALLR</sequence>
<accession>Q2J6N0</accession>
<proteinExistence type="inferred from homology"/>
<gene>
    <name evidence="1" type="primary">atpH</name>
    <name type="ordered locus">Francci3_3710</name>
</gene>
<comment type="function">
    <text evidence="1">F(1)F(0) ATP synthase produces ATP from ADP in the presence of a proton or sodium gradient. F-type ATPases consist of two structural domains, F(1) containing the extramembraneous catalytic core and F(0) containing the membrane proton channel, linked together by a central stalk and a peripheral stalk. During catalysis, ATP synthesis in the catalytic domain of F(1) is coupled via a rotary mechanism of the central stalk subunits to proton translocation.</text>
</comment>
<comment type="function">
    <text evidence="1">This protein is part of the stalk that links CF(0) to CF(1). It either transmits conformational changes from CF(0) to CF(1) or is implicated in proton conduction.</text>
</comment>
<comment type="subunit">
    <text evidence="1">F-type ATPases have 2 components, F(1) - the catalytic core - and F(0) - the membrane proton channel. F(1) has five subunits: alpha(3), beta(3), gamma(1), delta(1), epsilon(1). F(0) has three main subunits: a(1), b(2) and c(10-14). The alpha and beta chains form an alternating ring which encloses part of the gamma chain. F(1) is attached to F(0) by a central stalk formed by the gamma and epsilon chains, while a peripheral stalk is formed by the delta and b chains.</text>
</comment>
<comment type="subcellular location">
    <subcellularLocation>
        <location evidence="1">Cell membrane</location>
        <topology evidence="1">Peripheral membrane protein</topology>
    </subcellularLocation>
</comment>
<comment type="similarity">
    <text evidence="1">Belongs to the ATPase delta chain family.</text>
</comment>
<protein>
    <recommendedName>
        <fullName evidence="1">ATP synthase subunit delta</fullName>
    </recommendedName>
    <alternativeName>
        <fullName evidence="1">ATP synthase F(1) sector subunit delta</fullName>
    </alternativeName>
    <alternativeName>
        <fullName evidence="1">F-type ATPase subunit delta</fullName>
        <shortName evidence="1">F-ATPase subunit delta</shortName>
    </alternativeName>
</protein>
<name>ATPD_FRACC</name>
<dbReference type="EMBL" id="CP000249">
    <property type="protein sequence ID" value="ABD13062.1"/>
    <property type="molecule type" value="Genomic_DNA"/>
</dbReference>
<dbReference type="RefSeq" id="WP_011438086.1">
    <property type="nucleotide sequence ID" value="NZ_LRTJ01000048.1"/>
</dbReference>
<dbReference type="SMR" id="Q2J6N0"/>
<dbReference type="STRING" id="106370.Francci3_3710"/>
<dbReference type="KEGG" id="fra:Francci3_3710"/>
<dbReference type="eggNOG" id="COG0712">
    <property type="taxonomic scope" value="Bacteria"/>
</dbReference>
<dbReference type="HOGENOM" id="CLU_088880_0_0_11"/>
<dbReference type="OrthoDB" id="5242917at2"/>
<dbReference type="PhylomeDB" id="Q2J6N0"/>
<dbReference type="Proteomes" id="UP000001937">
    <property type="component" value="Chromosome"/>
</dbReference>
<dbReference type="GO" id="GO:0005886">
    <property type="term" value="C:plasma membrane"/>
    <property type="evidence" value="ECO:0007669"/>
    <property type="project" value="UniProtKB-SubCell"/>
</dbReference>
<dbReference type="GO" id="GO:0045259">
    <property type="term" value="C:proton-transporting ATP synthase complex"/>
    <property type="evidence" value="ECO:0007669"/>
    <property type="project" value="UniProtKB-KW"/>
</dbReference>
<dbReference type="GO" id="GO:0046933">
    <property type="term" value="F:proton-transporting ATP synthase activity, rotational mechanism"/>
    <property type="evidence" value="ECO:0007669"/>
    <property type="project" value="UniProtKB-UniRule"/>
</dbReference>
<dbReference type="Gene3D" id="1.10.520.20">
    <property type="entry name" value="N-terminal domain of the delta subunit of the F1F0-ATP synthase"/>
    <property type="match status" value="1"/>
</dbReference>
<dbReference type="HAMAP" id="MF_01416">
    <property type="entry name" value="ATP_synth_delta_bact"/>
    <property type="match status" value="1"/>
</dbReference>
<dbReference type="InterPro" id="IPR026015">
    <property type="entry name" value="ATP_synth_OSCP/delta_N_sf"/>
</dbReference>
<dbReference type="InterPro" id="IPR020781">
    <property type="entry name" value="ATPase_OSCP/d_CS"/>
</dbReference>
<dbReference type="InterPro" id="IPR000711">
    <property type="entry name" value="ATPase_OSCP/dsu"/>
</dbReference>
<dbReference type="NCBIfam" id="NF009967">
    <property type="entry name" value="PRK13430.1"/>
    <property type="match status" value="1"/>
</dbReference>
<dbReference type="PANTHER" id="PTHR11910">
    <property type="entry name" value="ATP SYNTHASE DELTA CHAIN"/>
    <property type="match status" value="1"/>
</dbReference>
<dbReference type="Pfam" id="PF00213">
    <property type="entry name" value="OSCP"/>
    <property type="match status" value="1"/>
</dbReference>
<dbReference type="PROSITE" id="PS00389">
    <property type="entry name" value="ATPASE_DELTA"/>
    <property type="match status" value="1"/>
</dbReference>
<organism>
    <name type="scientific">Frankia casuarinae (strain DSM 45818 / CECT 9043 / HFP020203 / CcI3)</name>
    <dbReference type="NCBI Taxonomy" id="106370"/>
    <lineage>
        <taxon>Bacteria</taxon>
        <taxon>Bacillati</taxon>
        <taxon>Actinomycetota</taxon>
        <taxon>Actinomycetes</taxon>
        <taxon>Frankiales</taxon>
        <taxon>Frankiaceae</taxon>
        <taxon>Frankia</taxon>
    </lineage>
</organism>